<keyword id="KW-0025">Alternative splicing</keyword>
<keyword id="KW-1003">Cell membrane</keyword>
<keyword id="KW-0141">cGMP biosynthesis</keyword>
<keyword id="KW-0225">Disease variant</keyword>
<keyword id="KW-1015">Disulfide bond</keyword>
<keyword id="KW-0242">Dwarfism</keyword>
<keyword id="KW-0325">Glycoprotein</keyword>
<keyword id="KW-0342">GTP-binding</keyword>
<keyword id="KW-0456">Lyase</keyword>
<keyword id="KW-0472">Membrane</keyword>
<keyword id="KW-0547">Nucleotide-binding</keyword>
<keyword id="KW-0892">Osteogenesis</keyword>
<keyword id="KW-0597">Phosphoprotein</keyword>
<keyword id="KW-1267">Proteomics identification</keyword>
<keyword id="KW-0675">Receptor</keyword>
<keyword id="KW-1185">Reference proteome</keyword>
<keyword id="KW-0732">Signal</keyword>
<keyword id="KW-0812">Transmembrane</keyword>
<keyword id="KW-1133">Transmembrane helix</keyword>
<gene>
    <name type="primary">NPR2</name>
    <name type="synonym">ANPRB</name>
</gene>
<sequence length="1047" mass="117022">MALPSLLLLVAALAGGVRPPGARNLTLAVVLPEHNLSYAWAWPRVGPAVALAVEALGRALPVDLRFVSSELEGACSEYLAPLSAVDLKLYHDPDLLLGPGCVYPAASVARFASHWRLPLLTAGAVASGFSAKNDHYRTLVRTGPSAPKLGEFVVTLHGHFNWTARAALLYLDARTDDRPHYFTIEGVFEALQGSNLSVQHQVYAREPGGPEQATHFIRANGRIVYICGPLEMLHEILLQAQRENLTNGDYVFFYLDVFGESLRAGPTRATGRPWQDNRTREQAQALREAFQTVLVITYREPPNPEYQEFQNRLLIRAREDFGVELGPSLMNLIAGCFYDGILLYAEVLNETIQEGGTREDGLRIVEKMQGRRYHGVTGLVVMDKNNDRETDFVLWAMGDLDSGDFQPAAHYSGAEKQIWWTGRPIPWVKGAPPSDNPPCAFDLDDPSCDKTPLSTLAIVALGTGITFIMFGVSSFLIFRKLMLEKELASMLWRIRWEELQFGNSERYHKGAGSRLTLSLRGSSYGSLMTAHGKYQIFANTGHFKGNVVAIKHVNKKRIELTRQVLFELKHMRDVQFNHLTRFIGACIDPPNICIVTEYCPRGSLQDILENDSINLDWMFRYSLINDLVKGMAFLHNSIISSHGSLKSSNCVVDSRFVLKITDYGLASFRSTAEPDDSHALYAKKLWTAPELLSGNPLPTTGMQKADVYSFGIILQEIALRSGPFYLEGLDLSPKEIVQKVRNGQRPYFRPSIDRTQLNEELVLLMERCWAQDPAERPDFGQIKGFIRRFNKEGGTSILDNLLLRMEQYANNLEKLVEERTQAYLEEKRKAEALLYQILPHSVAEQLKRGETVQAEAFDSVTIYFSDIVGFTALSAESTPMQVVTLLNDLYTCFDAIIDNFDVYKVETIGDAYMVVSGLPGRNGQRHAPEIARMALALLDAVSSFRIRHRPHDQLRLRIGVHTGPVCAGVVGLKMPRYCLFGDTVNTASRMESNGQALKIHVSSTTKDALDELGCFQLELRGDVEMKGKGKMRTYWLLGERKGPPGLL</sequence>
<proteinExistence type="evidence at protein level"/>
<name>ANPRB_HUMAN</name>
<dbReference type="EC" id="4.6.1.2" evidence="18"/>
<dbReference type="EMBL" id="AB005647">
    <property type="protein sequence ID" value="BAA81737.1"/>
    <property type="molecule type" value="Genomic_DNA"/>
</dbReference>
<dbReference type="EMBL" id="AJ005282">
    <property type="protein sequence ID" value="CAA06466.1"/>
    <property type="molecule type" value="mRNA"/>
</dbReference>
<dbReference type="EMBL" id="AL133410">
    <property type="status" value="NOT_ANNOTATED_CDS"/>
    <property type="molecule type" value="Genomic_DNA"/>
</dbReference>
<dbReference type="EMBL" id="EU326311">
    <property type="protein sequence ID" value="ACA05920.1"/>
    <property type="molecule type" value="Genomic_DNA"/>
</dbReference>
<dbReference type="EMBL" id="EU326311">
    <property type="protein sequence ID" value="ACA05921.1"/>
    <property type="molecule type" value="Genomic_DNA"/>
</dbReference>
<dbReference type="EMBL" id="CH471071">
    <property type="protein sequence ID" value="EAW58338.1"/>
    <property type="molecule type" value="Genomic_DNA"/>
</dbReference>
<dbReference type="EMBL" id="CH471071">
    <property type="protein sequence ID" value="EAW58337.1"/>
    <property type="molecule type" value="Genomic_DNA"/>
</dbReference>
<dbReference type="EMBL" id="CH471071">
    <property type="protein sequence ID" value="EAW58339.1"/>
    <property type="molecule type" value="Genomic_DNA"/>
</dbReference>
<dbReference type="EMBL" id="CH471071">
    <property type="protein sequence ID" value="EAW58340.1"/>
    <property type="molecule type" value="Genomic_DNA"/>
</dbReference>
<dbReference type="EMBL" id="BC023017">
    <property type="protein sequence ID" value="AAH23017.1"/>
    <property type="molecule type" value="mRNA"/>
</dbReference>
<dbReference type="CCDS" id="CCDS6590.1">
    <molecule id="P20594-1"/>
</dbReference>
<dbReference type="PIR" id="S05514">
    <property type="entry name" value="OYHUBR"/>
</dbReference>
<dbReference type="RefSeq" id="NP_003986.2">
    <molecule id="P20594-1"/>
    <property type="nucleotide sequence ID" value="NM_003995.3"/>
</dbReference>
<dbReference type="SMR" id="P20594"/>
<dbReference type="BioGRID" id="110942">
    <property type="interactions" value="12"/>
</dbReference>
<dbReference type="CORUM" id="P20594"/>
<dbReference type="FunCoup" id="P20594">
    <property type="interactions" value="928"/>
</dbReference>
<dbReference type="IntAct" id="P20594">
    <property type="interactions" value="3"/>
</dbReference>
<dbReference type="STRING" id="9606.ENSP00000341083"/>
<dbReference type="BindingDB" id="P20594"/>
<dbReference type="ChEMBL" id="CHEMBL1795"/>
<dbReference type="DrugBank" id="DB01613">
    <property type="generic name" value="Erythrityl tetranitrate"/>
</dbReference>
<dbReference type="DrugBank" id="DB04899">
    <property type="generic name" value="Nesiritide"/>
</dbReference>
<dbReference type="DrugBank" id="DB11928">
    <property type="generic name" value="Vosoritide"/>
</dbReference>
<dbReference type="DrugCentral" id="P20594"/>
<dbReference type="GuidetoPHARMACOLOGY" id="1748"/>
<dbReference type="TCDB" id="8.A.85.1.2">
    <property type="family name" value="the guanylate cyclase (gc) family"/>
</dbReference>
<dbReference type="GlyCosmos" id="P20594">
    <property type="glycosylation" value="7 sites, No reported glycans"/>
</dbReference>
<dbReference type="GlyGen" id="P20594">
    <property type="glycosylation" value="9 sites"/>
</dbReference>
<dbReference type="iPTMnet" id="P20594"/>
<dbReference type="PhosphoSitePlus" id="P20594"/>
<dbReference type="BioMuta" id="NPR2"/>
<dbReference type="DMDM" id="113916"/>
<dbReference type="jPOST" id="P20594"/>
<dbReference type="MassIVE" id="P20594"/>
<dbReference type="PaxDb" id="9606-ENSP00000341083"/>
<dbReference type="PeptideAtlas" id="P20594"/>
<dbReference type="ProteomicsDB" id="53766">
    <molecule id="P20594-1"/>
</dbReference>
<dbReference type="ProteomicsDB" id="53767">
    <molecule id="P20594-2"/>
</dbReference>
<dbReference type="Pumba" id="P20594"/>
<dbReference type="Antibodypedia" id="1647">
    <property type="antibodies" value="256 antibodies from 33 providers"/>
</dbReference>
<dbReference type="DNASU" id="4882"/>
<dbReference type="Ensembl" id="ENST00000342694.7">
    <molecule id="P20594-1"/>
    <property type="protein sequence ID" value="ENSP00000341083.2"/>
    <property type="gene ID" value="ENSG00000159899.16"/>
</dbReference>
<dbReference type="GeneID" id="4882"/>
<dbReference type="KEGG" id="hsa:4882"/>
<dbReference type="MANE-Select" id="ENST00000342694.7">
    <property type="protein sequence ID" value="ENSP00000341083.2"/>
    <property type="RefSeq nucleotide sequence ID" value="NM_003995.4"/>
    <property type="RefSeq protein sequence ID" value="NP_003986.2"/>
</dbReference>
<dbReference type="UCSC" id="uc003zyd.4">
    <molecule id="P20594-1"/>
    <property type="organism name" value="human"/>
</dbReference>
<dbReference type="AGR" id="HGNC:7944"/>
<dbReference type="CTD" id="4882"/>
<dbReference type="DisGeNET" id="4882"/>
<dbReference type="GeneCards" id="NPR2"/>
<dbReference type="HGNC" id="HGNC:7944">
    <property type="gene designation" value="NPR2"/>
</dbReference>
<dbReference type="HPA" id="ENSG00000159899">
    <property type="expression patterns" value="Low tissue specificity"/>
</dbReference>
<dbReference type="MalaCards" id="NPR2"/>
<dbReference type="MIM" id="108961">
    <property type="type" value="gene"/>
</dbReference>
<dbReference type="MIM" id="602875">
    <property type="type" value="phenotype"/>
</dbReference>
<dbReference type="MIM" id="615923">
    <property type="type" value="phenotype"/>
</dbReference>
<dbReference type="MIM" id="616255">
    <property type="type" value="phenotype"/>
</dbReference>
<dbReference type="neXtProt" id="NX_P20594"/>
<dbReference type="OpenTargets" id="ENSG00000159899"/>
<dbReference type="Orphanet" id="40">
    <property type="disease" value="Acromesomelic dysplasia, Maroteaux type"/>
</dbReference>
<dbReference type="Orphanet" id="329191">
    <property type="disease" value="Tall stature-long halluces-multiple extra-epiphyses syndrome"/>
</dbReference>
<dbReference type="PharmGKB" id="PA257"/>
<dbReference type="VEuPathDB" id="HostDB:ENSG00000159899"/>
<dbReference type="eggNOG" id="KOG1023">
    <property type="taxonomic scope" value="Eukaryota"/>
</dbReference>
<dbReference type="GeneTree" id="ENSGT00940000156985"/>
<dbReference type="HOGENOM" id="CLU_001072_1_3_1"/>
<dbReference type="InParanoid" id="P20594"/>
<dbReference type="OMA" id="SEMDGAC"/>
<dbReference type="OrthoDB" id="1890790at2759"/>
<dbReference type="PAN-GO" id="P20594">
    <property type="GO annotations" value="6 GO annotations based on evolutionary models"/>
</dbReference>
<dbReference type="PhylomeDB" id="P20594"/>
<dbReference type="TreeFam" id="TF106338"/>
<dbReference type="BRENDA" id="4.6.1.2">
    <property type="organism ID" value="2681"/>
</dbReference>
<dbReference type="PathwayCommons" id="P20594"/>
<dbReference type="Reactome" id="R-HSA-5578768">
    <property type="pathway name" value="Physiological factors"/>
</dbReference>
<dbReference type="SignaLink" id="P20594"/>
<dbReference type="BioGRID-ORCS" id="4882">
    <property type="hits" value="10 hits in 1191 CRISPR screens"/>
</dbReference>
<dbReference type="ChiTaRS" id="NPR2">
    <property type="organism name" value="human"/>
</dbReference>
<dbReference type="GeneWiki" id="NPR2"/>
<dbReference type="GenomeRNAi" id="4882"/>
<dbReference type="Pharos" id="P20594">
    <property type="development level" value="Tclin"/>
</dbReference>
<dbReference type="PRO" id="PR:P20594"/>
<dbReference type="Proteomes" id="UP000005640">
    <property type="component" value="Chromosome 9"/>
</dbReference>
<dbReference type="RNAct" id="P20594">
    <property type="molecule type" value="protein"/>
</dbReference>
<dbReference type="Bgee" id="ENSG00000159899">
    <property type="expression patterns" value="Expressed in right uterine tube and 186 other cell types or tissues"/>
</dbReference>
<dbReference type="ExpressionAtlas" id="P20594">
    <property type="expression patterns" value="baseline and differential"/>
</dbReference>
<dbReference type="GO" id="GO:0005929">
    <property type="term" value="C:cilium"/>
    <property type="evidence" value="ECO:0007669"/>
    <property type="project" value="Ensembl"/>
</dbReference>
<dbReference type="GO" id="GO:0005737">
    <property type="term" value="C:cytoplasm"/>
    <property type="evidence" value="ECO:0007669"/>
    <property type="project" value="Ensembl"/>
</dbReference>
<dbReference type="GO" id="GO:0043005">
    <property type="term" value="C:neuron projection"/>
    <property type="evidence" value="ECO:0007669"/>
    <property type="project" value="Ensembl"/>
</dbReference>
<dbReference type="GO" id="GO:0005634">
    <property type="term" value="C:nucleus"/>
    <property type="evidence" value="ECO:0007669"/>
    <property type="project" value="Ensembl"/>
</dbReference>
<dbReference type="GO" id="GO:0005886">
    <property type="term" value="C:plasma membrane"/>
    <property type="evidence" value="ECO:0000314"/>
    <property type="project" value="UniProtKB"/>
</dbReference>
<dbReference type="GO" id="GO:0045202">
    <property type="term" value="C:synapse"/>
    <property type="evidence" value="ECO:0007669"/>
    <property type="project" value="GOC"/>
</dbReference>
<dbReference type="GO" id="GO:0005524">
    <property type="term" value="F:ATP binding"/>
    <property type="evidence" value="ECO:0007669"/>
    <property type="project" value="InterPro"/>
</dbReference>
<dbReference type="GO" id="GO:0005525">
    <property type="term" value="F:GTP binding"/>
    <property type="evidence" value="ECO:0007669"/>
    <property type="project" value="UniProtKB-KW"/>
</dbReference>
<dbReference type="GO" id="GO:0004383">
    <property type="term" value="F:guanylate cyclase activity"/>
    <property type="evidence" value="ECO:0000314"/>
    <property type="project" value="UniProtKB"/>
</dbReference>
<dbReference type="GO" id="GO:0042562">
    <property type="term" value="F:hormone binding"/>
    <property type="evidence" value="ECO:0000353"/>
    <property type="project" value="UniProtKB"/>
</dbReference>
<dbReference type="GO" id="GO:0042802">
    <property type="term" value="F:identical protein binding"/>
    <property type="evidence" value="ECO:0007669"/>
    <property type="project" value="Ensembl"/>
</dbReference>
<dbReference type="GO" id="GO:0016941">
    <property type="term" value="F:natriuretic peptide receptor activity"/>
    <property type="evidence" value="ECO:0000314"/>
    <property type="project" value="UniProtKB"/>
</dbReference>
<dbReference type="GO" id="GO:0017046">
    <property type="term" value="F:peptide hormone binding"/>
    <property type="evidence" value="ECO:0000353"/>
    <property type="project" value="UniProtKB"/>
</dbReference>
<dbReference type="GO" id="GO:0004672">
    <property type="term" value="F:protein kinase activity"/>
    <property type="evidence" value="ECO:0007669"/>
    <property type="project" value="InterPro"/>
</dbReference>
<dbReference type="GO" id="GO:0060466">
    <property type="term" value="P:activation of meiosis involved in egg activation"/>
    <property type="evidence" value="ECO:0007669"/>
    <property type="project" value="Ensembl"/>
</dbReference>
<dbReference type="GO" id="GO:0060385">
    <property type="term" value="P:axonogenesis involved in innervation"/>
    <property type="evidence" value="ECO:0007669"/>
    <property type="project" value="Ensembl"/>
</dbReference>
<dbReference type="GO" id="GO:0001974">
    <property type="term" value="P:blood vessel remodeling"/>
    <property type="evidence" value="ECO:0007669"/>
    <property type="project" value="Ensembl"/>
</dbReference>
<dbReference type="GO" id="GO:0061939">
    <property type="term" value="P:c-di-GMP signaling"/>
    <property type="evidence" value="ECO:0007669"/>
    <property type="project" value="Ensembl"/>
</dbReference>
<dbReference type="GO" id="GO:0071321">
    <property type="term" value="P:cellular response to cGMP"/>
    <property type="evidence" value="ECO:0007669"/>
    <property type="project" value="Ensembl"/>
</dbReference>
<dbReference type="GO" id="GO:0097011">
    <property type="term" value="P:cellular response to granulocyte macrophage colony-stimulating factor stimulus"/>
    <property type="evidence" value="ECO:0000270"/>
    <property type="project" value="UniProtKB"/>
</dbReference>
<dbReference type="GO" id="GO:1901653">
    <property type="term" value="P:cellular response to peptide"/>
    <property type="evidence" value="ECO:0007669"/>
    <property type="project" value="Ensembl"/>
</dbReference>
<dbReference type="GO" id="GO:0006182">
    <property type="term" value="P:cGMP biosynthetic process"/>
    <property type="evidence" value="ECO:0000314"/>
    <property type="project" value="GO_Central"/>
</dbReference>
<dbReference type="GO" id="GO:0007268">
    <property type="term" value="P:chemical synaptic transmission"/>
    <property type="evidence" value="ECO:0007669"/>
    <property type="project" value="Ensembl"/>
</dbReference>
<dbReference type="GO" id="GO:0002062">
    <property type="term" value="P:chondrocyte differentiation"/>
    <property type="evidence" value="ECO:0007669"/>
    <property type="project" value="Ensembl"/>
</dbReference>
<dbReference type="GO" id="GO:0035988">
    <property type="term" value="P:chondrocyte proliferation"/>
    <property type="evidence" value="ECO:0007669"/>
    <property type="project" value="Ensembl"/>
</dbReference>
<dbReference type="GO" id="GO:0051276">
    <property type="term" value="P:chromosome organization"/>
    <property type="evidence" value="ECO:0007669"/>
    <property type="project" value="Ensembl"/>
</dbReference>
<dbReference type="GO" id="GO:0048668">
    <property type="term" value="P:collateral sprouting"/>
    <property type="evidence" value="ECO:0007669"/>
    <property type="project" value="Ensembl"/>
</dbReference>
<dbReference type="GO" id="GO:0001549">
    <property type="term" value="P:cumulus cell differentiation"/>
    <property type="evidence" value="ECO:0007669"/>
    <property type="project" value="Ensembl"/>
</dbReference>
<dbReference type="GO" id="GO:0048546">
    <property type="term" value="P:digestive tract morphogenesis"/>
    <property type="evidence" value="ECO:0007669"/>
    <property type="project" value="Ensembl"/>
</dbReference>
<dbReference type="GO" id="GO:0001958">
    <property type="term" value="P:endochondral ossification"/>
    <property type="evidence" value="ECO:0007669"/>
    <property type="project" value="Ensembl"/>
</dbReference>
<dbReference type="GO" id="GO:0007173">
    <property type="term" value="P:epidermal growth factor receptor signaling pathway"/>
    <property type="evidence" value="ECO:0007669"/>
    <property type="project" value="Ensembl"/>
</dbReference>
<dbReference type="GO" id="GO:0097194">
    <property type="term" value="P:execution phase of apoptosis"/>
    <property type="evidence" value="ECO:0007669"/>
    <property type="project" value="Ensembl"/>
</dbReference>
<dbReference type="GO" id="GO:0030540">
    <property type="term" value="P:female genitalia development"/>
    <property type="evidence" value="ECO:0007669"/>
    <property type="project" value="Ensembl"/>
</dbReference>
<dbReference type="GO" id="GO:0035483">
    <property type="term" value="P:gastric emptying"/>
    <property type="evidence" value="ECO:0007669"/>
    <property type="project" value="Ensembl"/>
</dbReference>
<dbReference type="GO" id="GO:0035112">
    <property type="term" value="P:genitalia morphogenesis"/>
    <property type="evidence" value="ECO:0007669"/>
    <property type="project" value="Ensembl"/>
</dbReference>
<dbReference type="GO" id="GO:0003417">
    <property type="term" value="P:growth plate cartilage development"/>
    <property type="evidence" value="ECO:0007669"/>
    <property type="project" value="Ensembl"/>
</dbReference>
<dbReference type="GO" id="GO:0035108">
    <property type="term" value="P:limb morphogenesis"/>
    <property type="evidence" value="ECO:0007669"/>
    <property type="project" value="Ensembl"/>
</dbReference>
<dbReference type="GO" id="GO:0001945">
    <property type="term" value="P:lymph vessel development"/>
    <property type="evidence" value="ECO:0007669"/>
    <property type="project" value="Ensembl"/>
</dbReference>
<dbReference type="GO" id="GO:0000165">
    <property type="term" value="P:MAPK cascade"/>
    <property type="evidence" value="ECO:0007669"/>
    <property type="project" value="Ensembl"/>
</dbReference>
<dbReference type="GO" id="GO:1903537">
    <property type="term" value="P:meiotic cell cycle process involved in oocyte maturation"/>
    <property type="evidence" value="ECO:0007669"/>
    <property type="project" value="Ensembl"/>
</dbReference>
<dbReference type="GO" id="GO:0035264">
    <property type="term" value="P:multicellular organism growth"/>
    <property type="evidence" value="ECO:0007669"/>
    <property type="project" value="Ensembl"/>
</dbReference>
<dbReference type="GO" id="GO:0051447">
    <property type="term" value="P:negative regulation of meiotic cell cycle"/>
    <property type="evidence" value="ECO:0007669"/>
    <property type="project" value="Ensembl"/>
</dbReference>
<dbReference type="GO" id="GO:1900194">
    <property type="term" value="P:negative regulation of oocyte maturation"/>
    <property type="evidence" value="ECO:0007669"/>
    <property type="project" value="Ensembl"/>
</dbReference>
<dbReference type="GO" id="GO:0051402">
    <property type="term" value="P:neuron apoptotic process"/>
    <property type="evidence" value="ECO:0007669"/>
    <property type="project" value="Ensembl"/>
</dbReference>
<dbReference type="GO" id="GO:0019228">
    <property type="term" value="P:neuronal action potential"/>
    <property type="evidence" value="ECO:0007669"/>
    <property type="project" value="Ensembl"/>
</dbReference>
<dbReference type="GO" id="GO:0036342">
    <property type="term" value="P:post-anal tail morphogenesis"/>
    <property type="evidence" value="ECO:0007669"/>
    <property type="project" value="Ensembl"/>
</dbReference>
<dbReference type="GO" id="GO:0007168">
    <property type="term" value="P:receptor guanylyl cyclase signaling pathway"/>
    <property type="evidence" value="ECO:0000314"/>
    <property type="project" value="UniProtKB"/>
</dbReference>
<dbReference type="GO" id="GO:0008217">
    <property type="term" value="P:regulation of blood pressure"/>
    <property type="evidence" value="ECO:0000304"/>
    <property type="project" value="ProtInc"/>
</dbReference>
<dbReference type="GO" id="GO:0071774">
    <property type="term" value="P:response to fibroblast growth factor"/>
    <property type="evidence" value="ECO:0007669"/>
    <property type="project" value="Ensembl"/>
</dbReference>
<dbReference type="GO" id="GO:0034699">
    <property type="term" value="P:response to luteinizing hormone"/>
    <property type="evidence" value="ECO:0007669"/>
    <property type="project" value="Ensembl"/>
</dbReference>
<dbReference type="GO" id="GO:1902074">
    <property type="term" value="P:response to salt"/>
    <property type="evidence" value="ECO:0007669"/>
    <property type="project" value="Ensembl"/>
</dbReference>
<dbReference type="GO" id="GO:0007605">
    <property type="term" value="P:sensory perception of sound"/>
    <property type="evidence" value="ECO:0007669"/>
    <property type="project" value="Ensembl"/>
</dbReference>
<dbReference type="GO" id="GO:0048745">
    <property type="term" value="P:smooth muscle tissue development"/>
    <property type="evidence" value="ECO:0007669"/>
    <property type="project" value="Ensembl"/>
</dbReference>
<dbReference type="GO" id="GO:0007283">
    <property type="term" value="P:spermatogenesis"/>
    <property type="evidence" value="ECO:0007669"/>
    <property type="project" value="Ensembl"/>
</dbReference>
<dbReference type="GO" id="GO:0001964">
    <property type="term" value="P:startle response"/>
    <property type="evidence" value="ECO:0007669"/>
    <property type="project" value="Ensembl"/>
</dbReference>
<dbReference type="GO" id="GO:0007033">
    <property type="term" value="P:vacuole organization"/>
    <property type="evidence" value="ECO:0007669"/>
    <property type="project" value="Ensembl"/>
</dbReference>
<dbReference type="GO" id="GO:0061042">
    <property type="term" value="P:vascular wound healing"/>
    <property type="evidence" value="ECO:0007669"/>
    <property type="project" value="Ensembl"/>
</dbReference>
<dbReference type="GO" id="GO:0001570">
    <property type="term" value="P:vasculogenesis"/>
    <property type="evidence" value="ECO:0007669"/>
    <property type="project" value="Ensembl"/>
</dbReference>
<dbReference type="GO" id="GO:0021647">
    <property type="term" value="P:vestibulocochlear nerve maturation"/>
    <property type="evidence" value="ECO:0007669"/>
    <property type="project" value="Ensembl"/>
</dbReference>
<dbReference type="GO" id="GO:0050872">
    <property type="term" value="P:white fat cell differentiation"/>
    <property type="evidence" value="ECO:0007669"/>
    <property type="project" value="Ensembl"/>
</dbReference>
<dbReference type="CDD" id="cd07302">
    <property type="entry name" value="CHD"/>
    <property type="match status" value="1"/>
</dbReference>
<dbReference type="CDD" id="cd06384">
    <property type="entry name" value="PBP1_NPR_B"/>
    <property type="match status" value="1"/>
</dbReference>
<dbReference type="CDD" id="cd14042">
    <property type="entry name" value="PK_GC-A_B"/>
    <property type="match status" value="1"/>
</dbReference>
<dbReference type="FunFam" id="1.10.510.10:FF:000270">
    <property type="entry name" value="Guanylate cyclase"/>
    <property type="match status" value="1"/>
</dbReference>
<dbReference type="FunFam" id="3.30.200.20:FF:001106">
    <property type="entry name" value="Guanylate cyclase"/>
    <property type="match status" value="1"/>
</dbReference>
<dbReference type="FunFam" id="3.30.70.1230:FF:000004">
    <property type="entry name" value="Guanylate cyclase"/>
    <property type="match status" value="1"/>
</dbReference>
<dbReference type="FunFam" id="3.40.50.2300:FF:000101">
    <property type="entry name" value="Guanylate cyclase"/>
    <property type="match status" value="1"/>
</dbReference>
<dbReference type="FunFam" id="3.40.50.2300:FF:000245">
    <property type="entry name" value="Guanylate cyclase"/>
    <property type="match status" value="1"/>
</dbReference>
<dbReference type="Gene3D" id="3.40.50.2300">
    <property type="match status" value="3"/>
</dbReference>
<dbReference type="Gene3D" id="3.30.70.1230">
    <property type="entry name" value="Nucleotide cyclase"/>
    <property type="match status" value="1"/>
</dbReference>
<dbReference type="Gene3D" id="1.10.510.10">
    <property type="entry name" value="Transferase(Phosphotransferase) domain 1"/>
    <property type="match status" value="1"/>
</dbReference>
<dbReference type="InterPro" id="IPR001054">
    <property type="entry name" value="A/G_cyclase"/>
</dbReference>
<dbReference type="InterPro" id="IPR018297">
    <property type="entry name" value="A/G_cyclase_CS"/>
</dbReference>
<dbReference type="InterPro" id="IPR001828">
    <property type="entry name" value="ANF_lig-bd_rcpt"/>
</dbReference>
<dbReference type="InterPro" id="IPR001170">
    <property type="entry name" value="ANPR/GUC"/>
</dbReference>
<dbReference type="InterPro" id="IPR050401">
    <property type="entry name" value="Cyclic_nucleotide_synthase"/>
</dbReference>
<dbReference type="InterPro" id="IPR011009">
    <property type="entry name" value="Kinase-like_dom_sf"/>
</dbReference>
<dbReference type="InterPro" id="IPR029787">
    <property type="entry name" value="Nucleotide_cyclase"/>
</dbReference>
<dbReference type="InterPro" id="IPR028082">
    <property type="entry name" value="Peripla_BP_I"/>
</dbReference>
<dbReference type="InterPro" id="IPR000719">
    <property type="entry name" value="Prot_kinase_dom"/>
</dbReference>
<dbReference type="InterPro" id="IPR001245">
    <property type="entry name" value="Ser-Thr/Tyr_kinase_cat_dom"/>
</dbReference>
<dbReference type="PANTHER" id="PTHR11920:SF494">
    <property type="entry name" value="ATRIAL NATRIURETIC PEPTIDE RECEPTOR 2"/>
    <property type="match status" value="1"/>
</dbReference>
<dbReference type="PANTHER" id="PTHR11920">
    <property type="entry name" value="GUANYLYL CYCLASE"/>
    <property type="match status" value="1"/>
</dbReference>
<dbReference type="Pfam" id="PF01094">
    <property type="entry name" value="ANF_receptor"/>
    <property type="match status" value="1"/>
</dbReference>
<dbReference type="Pfam" id="PF00211">
    <property type="entry name" value="Guanylate_cyc"/>
    <property type="match status" value="1"/>
</dbReference>
<dbReference type="Pfam" id="PF07714">
    <property type="entry name" value="PK_Tyr_Ser-Thr"/>
    <property type="match status" value="1"/>
</dbReference>
<dbReference type="PRINTS" id="PR00255">
    <property type="entry name" value="NATPEPTIDER"/>
</dbReference>
<dbReference type="SMART" id="SM00044">
    <property type="entry name" value="CYCc"/>
    <property type="match status" value="1"/>
</dbReference>
<dbReference type="SUPFAM" id="SSF55073">
    <property type="entry name" value="Nucleotide cyclase"/>
    <property type="match status" value="1"/>
</dbReference>
<dbReference type="SUPFAM" id="SSF53822">
    <property type="entry name" value="Periplasmic binding protein-like I"/>
    <property type="match status" value="1"/>
</dbReference>
<dbReference type="SUPFAM" id="SSF56112">
    <property type="entry name" value="Protein kinase-like (PK-like)"/>
    <property type="match status" value="1"/>
</dbReference>
<dbReference type="PROSITE" id="PS00458">
    <property type="entry name" value="ANF_RECEPTORS"/>
    <property type="match status" value="1"/>
</dbReference>
<dbReference type="PROSITE" id="PS00452">
    <property type="entry name" value="GUANYLATE_CYCLASE_1"/>
    <property type="match status" value="1"/>
</dbReference>
<dbReference type="PROSITE" id="PS50125">
    <property type="entry name" value="GUANYLATE_CYCLASE_2"/>
    <property type="match status" value="1"/>
</dbReference>
<dbReference type="PROSITE" id="PS50011">
    <property type="entry name" value="PROTEIN_KINASE_DOM"/>
    <property type="match status" value="1"/>
</dbReference>
<accession>P20594</accession>
<accession>B0ZBF2</accession>
<accession>B0ZBF3</accession>
<accession>D3DRP3</accession>
<accession>D3DRP4</accession>
<accession>O60871</accession>
<accession>Q4VAK7</accession>
<accession>Q5TCV2</accession>
<accession>Q8TA93</accession>
<accession>Q9UQ50</accession>
<feature type="signal peptide" evidence="4">
    <location>
        <begin position="1"/>
        <end position="22"/>
    </location>
</feature>
<feature type="chain" id="PRO_0000012364" description="Atrial natriuretic peptide receptor 2">
    <location>
        <begin position="23"/>
        <end position="1047"/>
    </location>
</feature>
<feature type="topological domain" description="Extracellular" evidence="4">
    <location>
        <begin position="23"/>
        <end position="458"/>
    </location>
</feature>
<feature type="transmembrane region" description="Helical" evidence="4">
    <location>
        <begin position="459"/>
        <end position="478"/>
    </location>
</feature>
<feature type="topological domain" description="Cytoplasmic" evidence="4">
    <location>
        <begin position="479"/>
        <end position="1047"/>
    </location>
</feature>
<feature type="domain" description="Protein kinase" evidence="6">
    <location>
        <begin position="513"/>
        <end position="786"/>
    </location>
</feature>
<feature type="domain" description="Guanylate cyclase" evidence="5">
    <location>
        <begin position="861"/>
        <end position="991"/>
    </location>
</feature>
<feature type="modified residue" description="Phosphoserine" evidence="11">
    <location>
        <position position="513"/>
    </location>
</feature>
<feature type="modified residue" description="Phosphothreonine" evidence="11">
    <location>
        <position position="516"/>
    </location>
</feature>
<feature type="modified residue" description="Phosphoserine" evidence="11">
    <location>
        <position position="518"/>
    </location>
</feature>
<feature type="modified residue" description="Phosphoserine" evidence="2">
    <location>
        <position position="522"/>
    </location>
</feature>
<feature type="modified residue" description="Phosphoserine" evidence="11">
    <location>
        <position position="523"/>
    </location>
</feature>
<feature type="modified residue" description="Phosphoserine" evidence="11">
    <location>
        <position position="526"/>
    </location>
</feature>
<feature type="modified residue" description="Phosphothreonine" evidence="11">
    <location>
        <position position="529"/>
    </location>
</feature>
<feature type="glycosylation site" description="N-linked (GlcNAc...) asparagine" evidence="4">
    <location>
        <position position="24"/>
    </location>
</feature>
<feature type="glycosylation site" description="N-linked (GlcNAc...) asparagine" evidence="4">
    <location>
        <position position="35"/>
    </location>
</feature>
<feature type="glycosylation site" description="N-linked (GlcNAc...) asparagine" evidence="4">
    <location>
        <position position="161"/>
    </location>
</feature>
<feature type="glycosylation site" description="N-linked (GlcNAc...) asparagine" evidence="4">
    <location>
        <position position="195"/>
    </location>
</feature>
<feature type="glycosylation site" description="N-linked (GlcNAc...) asparagine" evidence="4">
    <location>
        <position position="244"/>
    </location>
</feature>
<feature type="glycosylation site" description="N-linked (GlcNAc...) asparagine" evidence="4">
    <location>
        <position position="277"/>
    </location>
</feature>
<feature type="glycosylation site" description="N-linked (GlcNAc...) asparagine" evidence="4">
    <location>
        <position position="349"/>
    </location>
</feature>
<feature type="disulfide bond" evidence="1">
    <location>
        <begin position="75"/>
        <end position="101"/>
    </location>
</feature>
<feature type="disulfide bond" description="Interchain" evidence="20">
    <location>
        <position position="439"/>
    </location>
</feature>
<feature type="disulfide bond" description="Interchain" evidence="20">
    <location>
        <position position="448"/>
    </location>
</feature>
<feature type="splice variant" id="VSP_001810" description="In isoform Short." evidence="19">
    <original>PVCAGVVGLKMPRYCLFGDTVNTASRMESNGQALKIHVSSTTKDALDELGCFQLELRGDVEMKGKGKMRTYWLLGERKGPPGLL</original>
    <variation>KADSHSSPSLHLSQTLPTCFFSKGQSVLGLLA</variation>
    <location>
        <begin position="964"/>
        <end position="1047"/>
    </location>
</feature>
<feature type="sequence variant" id="VAR_022583" description="In AMD1; dbSNP:rs28931581." evidence="7">
    <original>P</original>
    <variation>T</variation>
    <location>
        <position position="32"/>
    </location>
</feature>
<feature type="sequence variant" id="VAR_074678" description="In SNSK1; loss of C-type natriuretic peptide-induced signaling; dominant negative effect; loss of localization to the plasma membrane; dbSNP:rs796065355." evidence="14">
    <original>S</original>
    <variation>P</variation>
    <location>
        <position position="76"/>
    </location>
</feature>
<feature type="sequence variant" id="VAR_074679" description="In SNSK1; loss of C-type natriuretic peptide-induced signaling; dominant negative effect; retained in the endoplasmic reticulum; dbSNP:rs758478717." evidence="17">
    <original>R</original>
    <variation>C</variation>
    <location>
        <position position="110"/>
    </location>
</feature>
<feature type="sequence variant" id="VAR_022584" description="In AMD1; markedly deficient activity; dbSNP:rs28931582." evidence="7">
    <original>W</original>
    <variation>G</variation>
    <location>
        <position position="115"/>
    </location>
</feature>
<feature type="sequence variant" id="VAR_022585" description="In AMD1; dbSNP:rs28929479." evidence="7">
    <original>D</original>
    <variation>E</variation>
    <location>
        <position position="176"/>
    </location>
</feature>
<feature type="sequence variant" id="VAR_074680" description="Does not affect C-type natriuretic peptide-induced signaling; dbSNP:rs768423636." evidence="17">
    <original>V</original>
    <variation>I</variation>
    <location>
        <position position="187"/>
    </location>
</feature>
<feature type="sequence variant" id="VAR_042219" description="In dbSNP:rs55747238." evidence="9">
    <original>M</original>
    <variation>I</variation>
    <location>
        <position position="232"/>
    </location>
</feature>
<feature type="sequence variant" id="VAR_074681" description="In SNSK1; loss of C-type natriuretic peptide-induced signaling; dominant negative effect; loss of localization to the plasma membrane; dbSNP:rs139036657." evidence="14">
    <original>R</original>
    <variation>P</variation>
    <location>
        <position position="263"/>
    </location>
</feature>
<feature type="sequence variant" id="VAR_022586" description="In AMD1; markedly deficient activity; dbSNP:rs1313765432." evidence="7">
    <original>T</original>
    <variation>M</variation>
    <location>
        <position position="297"/>
    </location>
</feature>
<feature type="sequence variant" id="VAR_022587" description="In AMD1; dbSNP:rs1828087195." evidence="7">
    <original>Y</original>
    <variation>C</variation>
    <location>
        <position position="338"/>
    </location>
</feature>
<feature type="sequence variant" id="VAR_022588" description="In AMD1; dbSNP:rs1828117923." evidence="7">
    <original>A</original>
    <variation>T</variation>
    <location>
        <position position="409"/>
    </location>
</feature>
<feature type="sequence variant" id="VAR_022589" description="In AMD1; markedly deficient activity." evidence="7">
    <original>G</original>
    <variation>E</variation>
    <location>
        <position position="413"/>
    </location>
</feature>
<feature type="sequence variant" id="VAR_074682" description="In SNSK1; loss of C-type natriuretic peptide-induced signaling; dominant negative effect; no effect on cell surface expression; dbSNP:rs796065356." evidence="17">
    <original>Q</original>
    <variation>E</variation>
    <location>
        <position position="417"/>
    </location>
</feature>
<feature type="sequence variant" id="VAR_071875" description="In ECDM; mutant and wild-type alleles have similar expression levels; the mutation results in increased guanylate cyclase activity; dbSNP:rs587777597." evidence="16">
    <original>A</original>
    <variation>P</variation>
    <location>
        <position position="488"/>
    </location>
</feature>
<feature type="sequence variant" id="VAR_071876" description="In ECDM; the mutation results in increased guanylate cyclase activity; dbSNP:rs587777596." evidence="15">
    <original>R</original>
    <variation>C</variation>
    <location>
        <position position="655"/>
    </location>
</feature>
<feature type="sequence variant" id="VAR_076481" description="In AMD1; no effect on subcellular location; changed glycosylation; no effect on C-type natriuretic peptide binding; decreased guanylate cyclase activity; loss of natriuretic peptide receptor activity; dominant negative effect; dbSNP:rs1314542724." evidence="10 18">
    <original>L</original>
    <variation>F</variation>
    <location>
        <position position="658"/>
    </location>
</feature>
<feature type="sequence variant" id="VAR_022590" description="In AMD1; no effect on subcellular location; changed glycosylation; no effect on C-type natriuretic peptide binding; decreased guanylate cyclase activity; dbSNP:rs1305337032." evidence="7 18">
    <original>Y</original>
    <variation>C</variation>
    <location>
        <position position="708"/>
    </location>
</feature>
<feature type="sequence variant" id="VAR_011968" description="In dbSNP:rs5816.">
    <original>Q</original>
    <variation>E</variation>
    <location>
        <position position="771"/>
    </location>
</feature>
<feature type="sequence variant" id="VAR_022591" description="In AMD1; no effect on subcellular location; changed glycosylation; no effect on C-type natriuretic peptide binding; decreased guanylate cyclase activity; dbSNP:rs1303913631." evidence="7 18">
    <original>R</original>
    <variation>W</variation>
    <location>
        <position position="776"/>
    </location>
</feature>
<feature type="sequence variant" id="VAR_074683" description="In SNSK1; loss of C-type natriuretic peptide-induced signaling; dominant negative effect; no effect on cell surface expression; dbSNP:rs766256429." evidence="14">
    <original>R</original>
    <variation>C</variation>
    <location>
        <position position="819"/>
    </location>
</feature>
<feature type="sequence variant" id="VAR_042220" description="In dbSNP:rs55700371." evidence="9">
    <original>V</original>
    <variation>I</variation>
    <location>
        <position position="882"/>
    </location>
</feature>
<feature type="sequence variant" id="VAR_071877" description="In ECDM; the mutation results in higher guanylate cyclase activity; causes a 15-fold increase in basal Vmax; has higher affinity for GTP than wild-type in the presence of NPPC; might lead to a structural change that locks the enzyme in a conformation mimicking the ATP-bound state." evidence="12 13">
    <original>V</original>
    <variation>M</variation>
    <location>
        <position position="882"/>
    </location>
</feature>
<feature type="sequence variant" id="VAR_022592" description="In AMD1; dbSNP:rs370158184." evidence="7">
    <original>R</original>
    <variation>C</variation>
    <location>
        <position position="957"/>
    </location>
</feature>
<feature type="sequence variant" id="VAR_022593" description="In AMD1; no effect on subcellular location; changed glycosylation; no effect on C-type natriuretic peptide binding; decreased guanylate cyclase activity." evidence="7 18">
    <original>G</original>
    <variation>A</variation>
    <location>
        <position position="959"/>
    </location>
</feature>
<feature type="mutagenesis site" description="Decreased glycosylation. Decreased guanylate cyclase activity." evidence="18">
    <original>N</original>
    <variation>D</variation>
    <variation>Q</variation>
    <location>
        <position position="24"/>
    </location>
</feature>
<feature type="sequence conflict" description="In Ref. 2; BAA81737." evidence="20" ref="2">
    <original>T</original>
    <variation>S</variation>
    <location>
        <position position="755"/>
    </location>
</feature>
<evidence type="ECO:0000250" key="1"/>
<evidence type="ECO:0000250" key="2">
    <source>
        <dbReference type="UniProtKB" id="P16066"/>
    </source>
</evidence>
<evidence type="ECO:0000250" key="3">
    <source>
        <dbReference type="UniProtKB" id="P16067"/>
    </source>
</evidence>
<evidence type="ECO:0000255" key="4"/>
<evidence type="ECO:0000255" key="5">
    <source>
        <dbReference type="PROSITE-ProRule" id="PRU00099"/>
    </source>
</evidence>
<evidence type="ECO:0000255" key="6">
    <source>
        <dbReference type="PROSITE-ProRule" id="PRU00159"/>
    </source>
</evidence>
<evidence type="ECO:0000269" key="7">
    <source>
    </source>
</evidence>
<evidence type="ECO:0000269" key="8">
    <source>
    </source>
</evidence>
<evidence type="ECO:0000269" key="9">
    <source>
    </source>
</evidence>
<evidence type="ECO:0000269" key="10">
    <source>
    </source>
</evidence>
<evidence type="ECO:0000269" key="11">
    <source>
    </source>
</evidence>
<evidence type="ECO:0000269" key="12">
    <source>
    </source>
</evidence>
<evidence type="ECO:0000269" key="13">
    <source>
    </source>
</evidence>
<evidence type="ECO:0000269" key="14">
    <source>
    </source>
</evidence>
<evidence type="ECO:0000269" key="15">
    <source>
    </source>
</evidence>
<evidence type="ECO:0000269" key="16">
    <source>
    </source>
</evidence>
<evidence type="ECO:0000269" key="17">
    <source>
    </source>
</evidence>
<evidence type="ECO:0000269" key="18">
    <source>
    </source>
</evidence>
<evidence type="ECO:0000303" key="19">
    <source>
    </source>
</evidence>
<evidence type="ECO:0000305" key="20"/>
<evidence type="ECO:0000305" key="21">
    <source>
    </source>
</evidence>
<comment type="function">
    <text evidence="7 8 14 17 18">Receptor for the C-type natriuretic peptide NPPC/CNP hormone. Has guanylate cyclase activity upon binding of its ligand. May play a role in the regulation of skeletal growth.</text>
</comment>
<comment type="catalytic activity">
    <reaction evidence="18">
        <text>GTP = 3',5'-cyclic GMP + diphosphate</text>
        <dbReference type="Rhea" id="RHEA:13665"/>
        <dbReference type="ChEBI" id="CHEBI:33019"/>
        <dbReference type="ChEBI" id="CHEBI:37565"/>
        <dbReference type="ChEBI" id="CHEBI:57746"/>
        <dbReference type="EC" id="4.6.1.2"/>
    </reaction>
</comment>
<comment type="subcellular location">
    <subcellularLocation>
        <location evidence="14 18">Cell membrane</location>
        <topology evidence="21">Single-pass type I membrane protein</topology>
    </subcellularLocation>
</comment>
<comment type="alternative products">
    <event type="alternative splicing"/>
    <isoform>
        <id>P20594-1</id>
        <name>Long</name>
        <sequence type="displayed"/>
    </isoform>
    <isoform>
        <id>P20594-2</id>
        <name>Short</name>
        <name>NPR-BI</name>
        <sequence type="described" ref="VSP_001810"/>
    </isoform>
</comment>
<comment type="PTM">
    <text evidence="3 18">Phosphorylated (PubMed:26980729). Phosphorylation of the protein kinase-like domain is required for full activation by CNP (By similarity).</text>
</comment>
<comment type="PTM">
    <text evidence="18">Glycosylated.</text>
</comment>
<comment type="disease" evidence="7 10 18">
    <disease id="DI-00034">
        <name>Acromesomelic dysplasia 1</name>
        <acronym>AMD1</acronym>
        <description>A form of acromesomelic dysplasia, a skeletal disorder characterized by short stature, very short limbs and hand/foot malformations. The severity of limb abnormalities increases from proximal to distal with profoundly affected hands and feet showing brachydactyly and/or rudimentary fingers (knob-like fingers). AMD1 is an autosomal recessive form characterized by axial skeletal involvement with wedging of vertebral bodies. All skeletal elements are present but show abnormal rates of linear growth.</description>
        <dbReference type="MIM" id="602875"/>
    </disease>
    <text>The disease is caused by variants affecting the gene represented in this entry.</text>
</comment>
<comment type="disease" evidence="12 13 15 16">
    <disease id="DI-04178">
        <name>Epiphyseal chondrodysplasia, Miura type</name>
        <acronym>ECDM</acronym>
        <description>An overgrowth syndrome characterized by tall stature, long hands and feet with arachnodactyly, macrodactyly of the great toes, scoliosis, coxa valga and slipped capital femoral epiphysis.</description>
        <dbReference type="MIM" id="615923"/>
    </disease>
    <text>The disease is caused by variants affecting the gene represented in this entry.</text>
</comment>
<comment type="disease" evidence="14 17">
    <disease id="DI-04508">
        <name>Short stature with non-specific skeletal abnormalities 1</name>
        <acronym>SNSK1</acronym>
        <description>An autosomal dominant condition characterized by short stature, defined as a height less than 2 SD below normal, and no endocrine abnormalities. Some SNSK1 patients show delayed bone age.</description>
        <dbReference type="MIM" id="616255"/>
    </disease>
    <text>The disease is caused by variants affecting the gene represented in this entry.</text>
</comment>
<comment type="miscellaneous">
    <molecule>Isoform Short</molecule>
    <text evidence="20">May be produced at very low levels due to a premature stop codon in the mRNA, leading to nonsense-mediated mRNA decay.</text>
</comment>
<comment type="similarity">
    <text evidence="5">Belongs to the adenylyl cyclase class-4/guanylyl cyclase family.</text>
</comment>
<protein>
    <recommendedName>
        <fullName>Atrial natriuretic peptide receptor 2</fullName>
        <ecNumber evidence="18">4.6.1.2</ecNumber>
    </recommendedName>
    <alternativeName>
        <fullName>Atrial natriuretic peptide receptor type B</fullName>
        <shortName>ANP-B</shortName>
        <shortName>ANPR-B</shortName>
        <shortName>NPR-B</shortName>
    </alternativeName>
    <alternativeName>
        <fullName>Guanylate cyclase B</fullName>
        <shortName>GC-B</shortName>
    </alternativeName>
</protein>
<organism>
    <name type="scientific">Homo sapiens</name>
    <name type="common">Human</name>
    <dbReference type="NCBI Taxonomy" id="9606"/>
    <lineage>
        <taxon>Eukaryota</taxon>
        <taxon>Metazoa</taxon>
        <taxon>Chordata</taxon>
        <taxon>Craniata</taxon>
        <taxon>Vertebrata</taxon>
        <taxon>Euteleostomi</taxon>
        <taxon>Mammalia</taxon>
        <taxon>Eutheria</taxon>
        <taxon>Euarchontoglires</taxon>
        <taxon>Primates</taxon>
        <taxon>Haplorrhini</taxon>
        <taxon>Catarrhini</taxon>
        <taxon>Hominidae</taxon>
        <taxon>Homo</taxon>
    </lineage>
</organism>
<reference key="1">
    <citation type="journal article" date="1989" name="Nature">
        <title>Differential activation by atrial and brain natriuretic peptides of two different receptor guanylate cyclases.</title>
        <authorList>
            <person name="Chang M.S."/>
            <person name="Lowe D.G."/>
            <person name="Lewis M."/>
            <person name="Hellmiss R."/>
            <person name="Chen E."/>
            <person name="Goeddel D.V."/>
        </authorList>
    </citation>
    <scope>NUCLEOTIDE SEQUENCE (ISOFORM LONG)</scope>
    <source>
        <tissue>Brain</tissue>
    </source>
</reference>
<reference key="2">
    <citation type="journal article" date="1999" name="Circ. Res.">
        <title>Structure of the type B human natriuretic peptide receptor gene and association of a novel microsatellite polymorphism with essential hypertension.</title>
        <authorList>
            <person name="Rehemudula D."/>
            <person name="Nakayama T."/>
            <person name="Soma M."/>
            <person name="Takahashi Y."/>
            <person name="Uwabo J."/>
            <person name="Sato M."/>
            <person name="Izumi Y."/>
            <person name="Kanmatsuse K."/>
            <person name="Ozawa Y."/>
        </authorList>
    </citation>
    <scope>NUCLEOTIDE SEQUENCE [GENOMIC DNA]</scope>
    <source>
        <tissue>Blood</tissue>
    </source>
</reference>
<reference key="3">
    <citation type="journal article" date="1999" name="J. Am. Soc. Nephrol.">
        <title>cGMP-dependent and -independent inhibition of a K+ conductance by natriuretic peptides: molecular and functional studies in human proximal tubule cells.</title>
        <authorList>
            <person name="Hirsch J.R."/>
            <person name="Meyer M."/>
            <person name="Maegert H.-J."/>
            <person name="Forssmann W.-G."/>
            <person name="Mollerup S."/>
            <person name="Herter P."/>
            <person name="Weber G."/>
            <person name="Cermak R."/>
            <person name="Ankorina-Stark I."/>
            <person name="Schlatter E."/>
            <person name="Kruhoffer M."/>
        </authorList>
    </citation>
    <scope>NUCLEOTIDE SEQUENCE [MRNA] (ISOFORM SHORT)</scope>
    <source>
        <tissue>Kidney</tissue>
    </source>
</reference>
<reference key="4">
    <citation type="journal article" date="2004" name="Nature">
        <title>DNA sequence and analysis of human chromosome 9.</title>
        <authorList>
            <person name="Humphray S.J."/>
            <person name="Oliver K."/>
            <person name="Hunt A.R."/>
            <person name="Plumb R.W."/>
            <person name="Loveland J.E."/>
            <person name="Howe K.L."/>
            <person name="Andrews T.D."/>
            <person name="Searle S."/>
            <person name="Hunt S.E."/>
            <person name="Scott C.E."/>
            <person name="Jones M.C."/>
            <person name="Ainscough R."/>
            <person name="Almeida J.P."/>
            <person name="Ambrose K.D."/>
            <person name="Ashwell R.I.S."/>
            <person name="Babbage A.K."/>
            <person name="Babbage S."/>
            <person name="Bagguley C.L."/>
            <person name="Bailey J."/>
            <person name="Banerjee R."/>
            <person name="Barker D.J."/>
            <person name="Barlow K.F."/>
            <person name="Bates K."/>
            <person name="Beasley H."/>
            <person name="Beasley O."/>
            <person name="Bird C.P."/>
            <person name="Bray-Allen S."/>
            <person name="Brown A.J."/>
            <person name="Brown J.Y."/>
            <person name="Burford D."/>
            <person name="Burrill W."/>
            <person name="Burton J."/>
            <person name="Carder C."/>
            <person name="Carter N.P."/>
            <person name="Chapman J.C."/>
            <person name="Chen Y."/>
            <person name="Clarke G."/>
            <person name="Clark S.Y."/>
            <person name="Clee C.M."/>
            <person name="Clegg S."/>
            <person name="Collier R.E."/>
            <person name="Corby N."/>
            <person name="Crosier M."/>
            <person name="Cummings A.T."/>
            <person name="Davies J."/>
            <person name="Dhami P."/>
            <person name="Dunn M."/>
            <person name="Dutta I."/>
            <person name="Dyer L.W."/>
            <person name="Earthrowl M.E."/>
            <person name="Faulkner L."/>
            <person name="Fleming C.J."/>
            <person name="Frankish A."/>
            <person name="Frankland J.A."/>
            <person name="French L."/>
            <person name="Fricker D.G."/>
            <person name="Garner P."/>
            <person name="Garnett J."/>
            <person name="Ghori J."/>
            <person name="Gilbert J.G.R."/>
            <person name="Glison C."/>
            <person name="Grafham D.V."/>
            <person name="Gribble S."/>
            <person name="Griffiths C."/>
            <person name="Griffiths-Jones S."/>
            <person name="Grocock R."/>
            <person name="Guy J."/>
            <person name="Hall R.E."/>
            <person name="Hammond S."/>
            <person name="Harley J.L."/>
            <person name="Harrison E.S.I."/>
            <person name="Hart E.A."/>
            <person name="Heath P.D."/>
            <person name="Henderson C.D."/>
            <person name="Hopkins B.L."/>
            <person name="Howard P.J."/>
            <person name="Howden P.J."/>
            <person name="Huckle E."/>
            <person name="Johnson C."/>
            <person name="Johnson D."/>
            <person name="Joy A.A."/>
            <person name="Kay M."/>
            <person name="Keenan S."/>
            <person name="Kershaw J.K."/>
            <person name="Kimberley A.M."/>
            <person name="King A."/>
            <person name="Knights A."/>
            <person name="Laird G.K."/>
            <person name="Langford C."/>
            <person name="Lawlor S."/>
            <person name="Leongamornlert D.A."/>
            <person name="Leversha M."/>
            <person name="Lloyd C."/>
            <person name="Lloyd D.M."/>
            <person name="Lovell J."/>
            <person name="Martin S."/>
            <person name="Mashreghi-Mohammadi M."/>
            <person name="Matthews L."/>
            <person name="McLaren S."/>
            <person name="McLay K.E."/>
            <person name="McMurray A."/>
            <person name="Milne S."/>
            <person name="Nickerson T."/>
            <person name="Nisbett J."/>
            <person name="Nordsiek G."/>
            <person name="Pearce A.V."/>
            <person name="Peck A.I."/>
            <person name="Porter K.M."/>
            <person name="Pandian R."/>
            <person name="Pelan S."/>
            <person name="Phillimore B."/>
            <person name="Povey S."/>
            <person name="Ramsey Y."/>
            <person name="Rand V."/>
            <person name="Scharfe M."/>
            <person name="Sehra H.K."/>
            <person name="Shownkeen R."/>
            <person name="Sims S.K."/>
            <person name="Skuce C.D."/>
            <person name="Smith M."/>
            <person name="Steward C.A."/>
            <person name="Swarbreck D."/>
            <person name="Sycamore N."/>
            <person name="Tester J."/>
            <person name="Thorpe A."/>
            <person name="Tracey A."/>
            <person name="Tromans A."/>
            <person name="Thomas D.W."/>
            <person name="Wall M."/>
            <person name="Wallis J.M."/>
            <person name="West A.P."/>
            <person name="Whitehead S.L."/>
            <person name="Willey D.L."/>
            <person name="Williams S.A."/>
            <person name="Wilming L."/>
            <person name="Wray P.W."/>
            <person name="Young L."/>
            <person name="Ashurst J.L."/>
            <person name="Coulson A."/>
            <person name="Blocker H."/>
            <person name="Durbin R.M."/>
            <person name="Sulston J.E."/>
            <person name="Hubbard T."/>
            <person name="Jackson M.J."/>
            <person name="Bentley D.R."/>
            <person name="Beck S."/>
            <person name="Rogers J."/>
            <person name="Dunham I."/>
        </authorList>
    </citation>
    <scope>NUCLEOTIDE SEQUENCE [LARGE SCALE GENOMIC DNA]</scope>
</reference>
<reference key="5">
    <citation type="submission" date="2005-09" db="EMBL/GenBank/DDBJ databases">
        <authorList>
            <person name="Mural R.J."/>
            <person name="Istrail S."/>
            <person name="Sutton G.G."/>
            <person name="Florea L."/>
            <person name="Halpern A.L."/>
            <person name="Mobarry C.M."/>
            <person name="Lippert R."/>
            <person name="Walenz B."/>
            <person name="Shatkay H."/>
            <person name="Dew I."/>
            <person name="Miller J.R."/>
            <person name="Flanigan M.J."/>
            <person name="Edwards N.J."/>
            <person name="Bolanos R."/>
            <person name="Fasulo D."/>
            <person name="Halldorsson B.V."/>
            <person name="Hannenhalli S."/>
            <person name="Turner R."/>
            <person name="Yooseph S."/>
            <person name="Lu F."/>
            <person name="Nusskern D.R."/>
            <person name="Shue B.C."/>
            <person name="Zheng X.H."/>
            <person name="Zhong F."/>
            <person name="Delcher A.L."/>
            <person name="Huson D.H."/>
            <person name="Kravitz S.A."/>
            <person name="Mouchard L."/>
            <person name="Reinert K."/>
            <person name="Remington K.A."/>
            <person name="Clark A.G."/>
            <person name="Waterman M.S."/>
            <person name="Eichler E.E."/>
            <person name="Adams M.D."/>
            <person name="Hunkapiller M.W."/>
            <person name="Myers E.W."/>
            <person name="Venter J.C."/>
        </authorList>
    </citation>
    <scope>NUCLEOTIDE SEQUENCE [LARGE SCALE GENOMIC DNA]</scope>
</reference>
<reference key="6">
    <citation type="submission" date="2007-12" db="EMBL/GenBank/DDBJ databases">
        <authorList>
            <consortium name="NHLBI resequencing and genotyping service (RS&amp;G)"/>
        </authorList>
    </citation>
    <scope>NUCLEOTIDE SEQUENCE [GENOMIC DNA]</scope>
</reference>
<reference key="7">
    <citation type="journal article" date="2004" name="Genome Res.">
        <title>The status, quality, and expansion of the NIH full-length cDNA project: the Mammalian Gene Collection (MGC).</title>
        <authorList>
            <consortium name="The MGC Project Team"/>
        </authorList>
    </citation>
    <scope>NUCLEOTIDE SEQUENCE [LARGE SCALE MRNA] (ISOFORM LONG)</scope>
    <source>
        <tissue>Brain</tissue>
    </source>
</reference>
<reference key="8">
    <citation type="journal article" date="1991" name="J. Biol. Chem.">
        <title>Extracellular domain-IgG fusion proteins for three human natriuretic peptide receptors. Hormone pharmacology and application to solid phase screening of synthetic peptide antisera.</title>
        <authorList>
            <person name="Bennett B.D."/>
            <person name="Bennett G.L."/>
            <person name="Vitangcol R.V."/>
            <person name="Jewett J.R."/>
            <person name="Burnier J."/>
            <person name="Henzel W."/>
            <person name="Lowe D.G."/>
        </authorList>
    </citation>
    <scope>LIGAND-BINDING</scope>
</reference>
<reference key="9">
    <citation type="journal article" date="1991" name="Science">
        <title>Selective activation of the B natriuretic peptide receptor by C-type natriuretic peptide (CNP).</title>
        <authorList>
            <person name="Koller K.J."/>
            <person name="Lowe D.G."/>
            <person name="Bennett G.L."/>
            <person name="Minamino N."/>
            <person name="Kangawa K."/>
            <person name="Matsuo H."/>
            <person name="Goeddel D.V."/>
        </authorList>
    </citation>
    <scope>FUNCTION</scope>
</reference>
<reference key="10">
    <citation type="journal article" date="2004" name="Genome Biol.">
        <title>An unappreciated role for RNA surveillance.</title>
        <authorList>
            <person name="Hillman R.T."/>
            <person name="Green R.E."/>
            <person name="Brenner S.E."/>
        </authorList>
    </citation>
    <scope>SPLICE ISOFORM(S) THAT ARE POTENTIAL NMD TARGET(S)</scope>
</reference>
<reference key="11">
    <citation type="journal article" date="2004" name="Am. J. Hum. Genet.">
        <title>Mutations in the transmembrane natriuretic peptide receptor NPR-B impair skeletal growth and cause acromesomelic dysplasia, type Maroteaux.</title>
        <authorList>
            <person name="Bartels C.F."/>
            <person name="Buekuelmez H."/>
            <person name="Padayatti P."/>
            <person name="Rhee D.K."/>
            <person name="van Ravenswaaij-Arts C."/>
            <person name="Pauli R.M."/>
            <person name="Mundlos S."/>
            <person name="Chitayat D."/>
            <person name="Shih L.-Y."/>
            <person name="Al-Gazali L.I."/>
            <person name="Kant S."/>
            <person name="Cole T."/>
            <person name="Morton J."/>
            <person name="Cormier-Daire V."/>
            <person name="Faivre L."/>
            <person name="Lees M."/>
            <person name="Kirk J."/>
            <person name="Mortier G.R."/>
            <person name="Leroy J."/>
            <person name="Zabel B."/>
            <person name="Kim C.A."/>
            <person name="Crow Y."/>
            <person name="Braverman N.E."/>
            <person name="van den Akker F."/>
            <person name="Warman M.L."/>
        </authorList>
    </citation>
    <scope>FUNCTION</scope>
    <scope>VARIANTS AMD1 THR-32; GLY-115; GLU-176; MET-297; CYS-338; THR-409; GLU-413; CYS-708; TRP-776; CYS-957 AND ALA-959</scope>
    <scope>CHARACTERIZATION OF VARIANTS AMD1 GLY-115; MET-297 AND GLU-413</scope>
</reference>
<reference key="12">
    <citation type="journal article" date="2010" name="Biochemistry">
        <title>Mass spectrometric identification of phosphorylation sites in guanylyl cyclase A and B.</title>
        <authorList>
            <person name="Yoder A.R."/>
            <person name="Stone M.D."/>
            <person name="Griffin T.J."/>
            <person name="Potter L.R."/>
        </authorList>
    </citation>
    <scope>PHOSPHORYLATION AT SER-513; THR-516; SER-518; SER-523; SER-526 AND THR-529</scope>
</reference>
<reference key="13">
    <citation type="journal article" date="2007" name="Nature">
        <title>Patterns of somatic mutation in human cancer genomes.</title>
        <authorList>
            <person name="Greenman C."/>
            <person name="Stephens P."/>
            <person name="Smith R."/>
            <person name="Dalgliesh G.L."/>
            <person name="Hunter C."/>
            <person name="Bignell G."/>
            <person name="Davies H."/>
            <person name="Teague J."/>
            <person name="Butler A."/>
            <person name="Stevens C."/>
            <person name="Edkins S."/>
            <person name="O'Meara S."/>
            <person name="Vastrik I."/>
            <person name="Schmidt E.E."/>
            <person name="Avis T."/>
            <person name="Barthorpe S."/>
            <person name="Bhamra G."/>
            <person name="Buck G."/>
            <person name="Choudhury B."/>
            <person name="Clements J."/>
            <person name="Cole J."/>
            <person name="Dicks E."/>
            <person name="Forbes S."/>
            <person name="Gray K."/>
            <person name="Halliday K."/>
            <person name="Harrison R."/>
            <person name="Hills K."/>
            <person name="Hinton J."/>
            <person name="Jenkinson A."/>
            <person name="Jones D."/>
            <person name="Menzies A."/>
            <person name="Mironenko T."/>
            <person name="Perry J."/>
            <person name="Raine K."/>
            <person name="Richardson D."/>
            <person name="Shepherd R."/>
            <person name="Small A."/>
            <person name="Tofts C."/>
            <person name="Varian J."/>
            <person name="Webb T."/>
            <person name="West S."/>
            <person name="Widaa S."/>
            <person name="Yates A."/>
            <person name="Cahill D.P."/>
            <person name="Louis D.N."/>
            <person name="Goldstraw P."/>
            <person name="Nicholson A.G."/>
            <person name="Brasseur F."/>
            <person name="Looijenga L."/>
            <person name="Weber B.L."/>
            <person name="Chiew Y.-E."/>
            <person name="DeFazio A."/>
            <person name="Greaves M.F."/>
            <person name="Green A.R."/>
            <person name="Campbell P."/>
            <person name="Birney E."/>
            <person name="Easton D.F."/>
            <person name="Chenevix-Trench G."/>
            <person name="Tan M.-H."/>
            <person name="Khoo S.K."/>
            <person name="Teh B.T."/>
            <person name="Yuen S.T."/>
            <person name="Leung S.Y."/>
            <person name="Wooster R."/>
            <person name="Futreal P.A."/>
            <person name="Stratton M.R."/>
        </authorList>
    </citation>
    <scope>VARIANTS [LARGE SCALE ANALYSIS] ILE-232 AND ILE-882</scope>
</reference>
<reference key="14">
    <citation type="journal article" date="2012" name="PLoS ONE">
        <title>An overgrowth disorder associated with excessive production of cGMP due to a gain-of-function mutation of the natriuretic peptide receptor 2 gene.</title>
        <authorList>
            <person name="Miura K."/>
            <person name="Namba N."/>
            <person name="Fujiwara M."/>
            <person name="Ohata Y."/>
            <person name="Ishida H."/>
            <person name="Kitaoka T."/>
            <person name="Kubota T."/>
            <person name="Hirai H."/>
            <person name="Higuchi C."/>
            <person name="Tsumaki N."/>
            <person name="Yoshikawa H."/>
            <person name="Sakai N."/>
            <person name="Michigami T."/>
            <person name="Ozono K."/>
        </authorList>
    </citation>
    <scope>INVOLVEMENT IN ECDM</scope>
    <scope>VARIANT ECDM MET-882</scope>
    <scope>CHARACTERIZATION OF VARIANT ECDM MET-882</scope>
</reference>
<reference key="15">
    <citation type="journal article" date="2013" name="J. Clin. Endocrinol. Metab.">
        <title>Heterozygous mutations in natriuretic peptide receptor-B (NPR2) gene as a cause of short stature in patients initially classified as idiopathic short stature.</title>
        <authorList>
            <person name="Vasques G.A."/>
            <person name="Amano N."/>
            <person name="Docko A.J."/>
            <person name="Funari M.F."/>
            <person name="Quedas E.P."/>
            <person name="Nishi M.Y."/>
            <person name="Arnhold I.J."/>
            <person name="Hasegawa T."/>
            <person name="Jorge A.A."/>
        </authorList>
    </citation>
    <scope>FUNCTION</scope>
    <scope>SUBCELLULAR LOCATION</scope>
    <scope>INVOLVEMENT IN SNSK1</scope>
    <scope>VARIANTS SNSK1 PRO-76; PRO-263 AND CYS-819</scope>
    <scope>CHARACTERIZATION OF VARIANTS SNSK1 PRO-76; PRO-263 AND CYS-819</scope>
</reference>
<reference key="16">
    <citation type="journal article" date="2014" name="J. Clin. Endocrinol. Metab.">
        <title>Identification and functional characterization of two novel NPR2 mutations in Japanese patients with short stature.</title>
        <authorList>
            <person name="Amano N."/>
            <person name="Mukai T."/>
            <person name="Ito Y."/>
            <person name="Narumi S."/>
            <person name="Tanaka T."/>
            <person name="Yokoya S."/>
            <person name="Ogata T."/>
            <person name="Hasegawa T."/>
        </authorList>
    </citation>
    <scope>FUNCTION</scope>
    <scope>SUBCELLULAR LOCATION</scope>
    <scope>INVOLVEMENT IN SNSK1</scope>
    <scope>VARIANTS SNSK1 CYS-110 AND GLU-417</scope>
    <scope>VARIANT ILE-187</scope>
    <scope>CHARACTERIZATION OF VARIANTS SNSK1 CYS-110 AND GLU-417</scope>
    <scope>CHARACTERIZATION OF VARIANT ILE-187</scope>
</reference>
<reference key="17">
    <citation type="journal article" date="2013" name="Bone">
        <title>A human skeletal overgrowth mutation increases maximal velocity and blocks desensitization of guanylyl cyclase-B.</title>
        <authorList>
            <person name="Robinson J.W."/>
            <person name="Dickey D.M."/>
            <person name="Miura K."/>
            <person name="Michigami T."/>
            <person name="Ozono K."/>
            <person name="Potter L.R."/>
        </authorList>
    </citation>
    <scope>CHARACTERIZATION OF VARIANT ECDM MET-882</scope>
</reference>
<reference key="18">
    <citation type="journal article" date="2016" name="J. Biol. Chem.">
        <title>Catalytically active guanylyl cyclase b requires endoplasmic reticulum-mediated glycosylation, and mutations that inhibit this process cause dwarfism.</title>
        <authorList>
            <person name="Dickey D.M."/>
            <person name="Edmund A.B."/>
            <person name="Otto N.M."/>
            <person name="Chaffee T.S."/>
            <person name="Robinson J.W."/>
            <person name="Potter L.R."/>
        </authorList>
    </citation>
    <scope>CHARACTERIZATION OF VARIANTS AMD1 PHE-658; CYS-708; TRP-776 AND ALA-959</scope>
    <scope>FUNCTION</scope>
    <scope>CATALYTIC ACTIVITY</scope>
    <scope>SUBCELLULAR LOCATION</scope>
    <scope>TOPOLOGY</scope>
    <scope>GLYCOSYLATION</scope>
    <scope>PHOSPHORYLATION</scope>
    <scope>MUTAGENESIS OF ASN-24</scope>
</reference>
<reference key="19">
    <citation type="journal article" date="2007" name="J. Clin. Endocrinol. Metab.">
        <title>Intact kinase homology domain of natriuretic peptide receptor-B is essential for skeletal development.</title>
        <authorList>
            <person name="Hachiya R."/>
            <person name="Ohashi Y."/>
            <person name="Kamei Y."/>
            <person name="Suganami T."/>
            <person name="Mochizuki H."/>
            <person name="Mitsui N."/>
            <person name="Saitoh M."/>
            <person name="Sakuragi M."/>
            <person name="Nishimura G."/>
            <person name="Ohashi H."/>
            <person name="Hasegawa T."/>
            <person name="Ogawa Y."/>
        </authorList>
    </citation>
    <scope>VARIANT AMD1 PHE-658</scope>
    <scope>CHARACTERIZATION OF VARIANT AMD1 PHE-658</scope>
</reference>
<reference key="20">
    <citation type="journal article" date="2013" name="J. Clin. Endocrinol. Metab.">
        <title>An activating mutation in the kinase homology domain of the natriuretic peptide receptor-2 causes extremely tall stature without skeletal deformities.</title>
        <authorList>
            <person name="Hannema S.E."/>
            <person name="van Duyvenvoorde H.A."/>
            <person name="Premsler T."/>
            <person name="Yang R.B."/>
            <person name="Mueller T.D."/>
            <person name="Gassner B."/>
            <person name="Oberwinkler H."/>
            <person name="Roelfsema F."/>
            <person name="Santen G.W."/>
            <person name="Prickett T."/>
            <person name="Kant S.G."/>
            <person name="Verkerk A.J."/>
            <person name="Uitterlinden A.G."/>
            <person name="Espiner E."/>
            <person name="Ruivenkamp C.A."/>
            <person name="Oostdijk W."/>
            <person name="Pereira A.M."/>
            <person name="Losekoot M."/>
            <person name="Kuhn M."/>
            <person name="Wit J.M."/>
        </authorList>
    </citation>
    <scope>VARIANT ECDM CYS-655</scope>
    <scope>CHARACTERIZATION OF VARIANT ECDM CYS-655</scope>
</reference>
<reference key="21">
    <citation type="journal article" date="2014" name="Am. J. Med. Genet. A">
        <title>Overgrowth syndrome associated with a gain-of-function mutation of the natriuretic peptide receptor 2 (NPR2) gene.</title>
        <authorList>
            <person name="Miura K."/>
            <person name="Kim O.H."/>
            <person name="Lee H.R."/>
            <person name="Namba N."/>
            <person name="Michigami T."/>
            <person name="Yoo W.J."/>
            <person name="Choi I.H."/>
            <person name="Ozono K."/>
            <person name="Cho T.J."/>
        </authorList>
    </citation>
    <scope>VARIANT ECDM PRO-488</scope>
    <scope>CHARACTERIZATION OF VARIANT ECDM PRO-488</scope>
</reference>